<accession>P9WLY1</accession>
<accession>L0T6L1</accession>
<accession>P64847</accession>
<accession>P71686</accession>
<dbReference type="EMBL" id="AL123456">
    <property type="protein sequence ID" value="CCP44176.1"/>
    <property type="molecule type" value="Genomic_DNA"/>
</dbReference>
<dbReference type="PIR" id="F70902">
    <property type="entry name" value="F70902"/>
</dbReference>
<dbReference type="RefSeq" id="NP_215933.1">
    <property type="nucleotide sequence ID" value="NC_000962.3"/>
</dbReference>
<dbReference type="RefSeq" id="WP_003407340.1">
    <property type="nucleotide sequence ID" value="NZ_NVQJ01000038.1"/>
</dbReference>
<dbReference type="STRING" id="83332.Rv1417"/>
<dbReference type="PaxDb" id="83332-Rv1417"/>
<dbReference type="GeneID" id="886704"/>
<dbReference type="KEGG" id="mtu:Rv1417"/>
<dbReference type="KEGG" id="mtv:RVBD_1417"/>
<dbReference type="TubercuList" id="Rv1417"/>
<dbReference type="eggNOG" id="ENOG50331K6">
    <property type="taxonomic scope" value="Bacteria"/>
</dbReference>
<dbReference type="InParanoid" id="P9WLY1"/>
<dbReference type="OrthoDB" id="5191452at2"/>
<dbReference type="Proteomes" id="UP000001584">
    <property type="component" value="Chromosome"/>
</dbReference>
<dbReference type="GO" id="GO:0005886">
    <property type="term" value="C:plasma membrane"/>
    <property type="evidence" value="ECO:0007005"/>
    <property type="project" value="MTBBASE"/>
</dbReference>
<dbReference type="GO" id="GO:0009231">
    <property type="term" value="P:riboflavin biosynthetic process"/>
    <property type="evidence" value="ECO:0000317"/>
    <property type="project" value="MTBBASE"/>
</dbReference>
<dbReference type="InterPro" id="IPR019692">
    <property type="entry name" value="CFP-6_PH"/>
</dbReference>
<dbReference type="Pfam" id="PF10756">
    <property type="entry name" value="bPH_6"/>
    <property type="match status" value="1"/>
</dbReference>
<sequence>MTAAPNDWDVVLRPHWTPLFAYAAAFLIAVAHVAGGLLLKVGSSGVVFQTADQVAMGALGLVLAGAVLLFARPRLRVGSAGLSVRNLLGDRIVGWSEVIGVSFPGGSRWARIDLADDEYIPVMAIQAVDKDRAVAAMDTVRSLLARYRPDLCAR</sequence>
<comment type="subcellular location">
    <subcellularLocation>
        <location evidence="2">Cell membrane</location>
        <topology evidence="2">Multi-pass membrane protein</topology>
    </subcellularLocation>
</comment>
<protein>
    <recommendedName>
        <fullName>Uncharacterized protein Rv1417</fullName>
    </recommendedName>
</protein>
<reference key="1">
    <citation type="journal article" date="1998" name="Nature">
        <title>Deciphering the biology of Mycobacterium tuberculosis from the complete genome sequence.</title>
        <authorList>
            <person name="Cole S.T."/>
            <person name="Brosch R."/>
            <person name="Parkhill J."/>
            <person name="Garnier T."/>
            <person name="Churcher C.M."/>
            <person name="Harris D.E."/>
            <person name="Gordon S.V."/>
            <person name="Eiglmeier K."/>
            <person name="Gas S."/>
            <person name="Barry C.E. III"/>
            <person name="Tekaia F."/>
            <person name="Badcock K."/>
            <person name="Basham D."/>
            <person name="Brown D."/>
            <person name="Chillingworth T."/>
            <person name="Connor R."/>
            <person name="Davies R.M."/>
            <person name="Devlin K."/>
            <person name="Feltwell T."/>
            <person name="Gentles S."/>
            <person name="Hamlin N."/>
            <person name="Holroyd S."/>
            <person name="Hornsby T."/>
            <person name="Jagels K."/>
            <person name="Krogh A."/>
            <person name="McLean J."/>
            <person name="Moule S."/>
            <person name="Murphy L.D."/>
            <person name="Oliver S."/>
            <person name="Osborne J."/>
            <person name="Quail M.A."/>
            <person name="Rajandream M.A."/>
            <person name="Rogers J."/>
            <person name="Rutter S."/>
            <person name="Seeger K."/>
            <person name="Skelton S."/>
            <person name="Squares S."/>
            <person name="Squares R."/>
            <person name="Sulston J.E."/>
            <person name="Taylor K."/>
            <person name="Whitehead S."/>
            <person name="Barrell B.G."/>
        </authorList>
    </citation>
    <scope>NUCLEOTIDE SEQUENCE [LARGE SCALE GENOMIC DNA]</scope>
    <source>
        <strain>ATCC 25618 / H37Rv</strain>
    </source>
</reference>
<reference key="2">
    <citation type="journal article" date="2011" name="Mol. Cell. Proteomics">
        <title>Proteogenomic analysis of Mycobacterium tuberculosis by high resolution mass spectrometry.</title>
        <authorList>
            <person name="Kelkar D.S."/>
            <person name="Kumar D."/>
            <person name="Kumar P."/>
            <person name="Balakrishnan L."/>
            <person name="Muthusamy B."/>
            <person name="Yadav A.K."/>
            <person name="Shrivastava P."/>
            <person name="Marimuthu A."/>
            <person name="Anand S."/>
            <person name="Sundaram H."/>
            <person name="Kingsbury R."/>
            <person name="Harsha H.C."/>
            <person name="Nair B."/>
            <person name="Prasad T.S."/>
            <person name="Chauhan D.S."/>
            <person name="Katoch K."/>
            <person name="Katoch V.M."/>
            <person name="Kumar P."/>
            <person name="Chaerkady R."/>
            <person name="Ramachandran S."/>
            <person name="Dash D."/>
            <person name="Pandey A."/>
        </authorList>
    </citation>
    <scope>IDENTIFICATION BY MASS SPECTROMETRY [LARGE SCALE ANALYSIS]</scope>
    <source>
        <strain>ATCC 25618 / H37Rv</strain>
    </source>
</reference>
<keyword id="KW-1003">Cell membrane</keyword>
<keyword id="KW-0472">Membrane</keyword>
<keyword id="KW-1185">Reference proteome</keyword>
<keyword id="KW-0812">Transmembrane</keyword>
<keyword id="KW-1133">Transmembrane helix</keyword>
<name>Y1417_MYCTU</name>
<proteinExistence type="evidence at protein level"/>
<organism>
    <name type="scientific">Mycobacterium tuberculosis (strain ATCC 25618 / H37Rv)</name>
    <dbReference type="NCBI Taxonomy" id="83332"/>
    <lineage>
        <taxon>Bacteria</taxon>
        <taxon>Bacillati</taxon>
        <taxon>Actinomycetota</taxon>
        <taxon>Actinomycetes</taxon>
        <taxon>Mycobacteriales</taxon>
        <taxon>Mycobacteriaceae</taxon>
        <taxon>Mycobacterium</taxon>
        <taxon>Mycobacterium tuberculosis complex</taxon>
    </lineage>
</organism>
<feature type="chain" id="PRO_0000103843" description="Uncharacterized protein Rv1417">
    <location>
        <begin position="1"/>
        <end position="154"/>
    </location>
</feature>
<feature type="transmembrane region" description="Helical" evidence="1">
    <location>
        <begin position="19"/>
        <end position="39"/>
    </location>
</feature>
<feature type="transmembrane region" description="Helical" evidence="1">
    <location>
        <begin position="51"/>
        <end position="71"/>
    </location>
</feature>
<gene>
    <name type="ordered locus">Rv1417</name>
    <name type="ORF">MTCY21B4.35</name>
</gene>
<evidence type="ECO:0000255" key="1"/>
<evidence type="ECO:0000305" key="2"/>